<organism>
    <name type="scientific">Methylococcus capsulatus (strain ATCC 33009 / NCIMB 11132 / Bath)</name>
    <dbReference type="NCBI Taxonomy" id="243233"/>
    <lineage>
        <taxon>Bacteria</taxon>
        <taxon>Pseudomonadati</taxon>
        <taxon>Pseudomonadota</taxon>
        <taxon>Gammaproteobacteria</taxon>
        <taxon>Methylococcales</taxon>
        <taxon>Methylococcaceae</taxon>
        <taxon>Methylococcus</taxon>
    </lineage>
</organism>
<sequence length="235" mass="26436">MLTLIDPNDERQAFPPPDAALKEPNGLLAVGGSLSVARLERAYRRGIFPWYGEGDPILWWSPDPRLVLFPEKLRISRSLRKTLRRRLFRFSFDRAFRAVITACAERREKSEGTWLTADMQSAYLAFHHAGFAHSFEAWQDGALVGGLYGVAMGRIFYGESMFHRVTDASKAALAFAVGCLSHWGYRMIDCQVYSSHLVSLGASTIPRSEFQALVSEYSETSVDPEAWKHAPGDFL</sequence>
<keyword id="KW-0012">Acyltransferase</keyword>
<keyword id="KW-0963">Cytoplasm</keyword>
<keyword id="KW-1185">Reference proteome</keyword>
<keyword id="KW-0808">Transferase</keyword>
<protein>
    <recommendedName>
        <fullName evidence="1">Leucyl/phenylalanyl-tRNA--protein transferase</fullName>
        <ecNumber evidence="1">2.3.2.6</ecNumber>
    </recommendedName>
    <alternativeName>
        <fullName evidence="1">L/F-transferase</fullName>
    </alternativeName>
    <alternativeName>
        <fullName evidence="1">Leucyltransferase</fullName>
    </alternativeName>
    <alternativeName>
        <fullName evidence="1">Phenyalanyltransferase</fullName>
    </alternativeName>
</protein>
<proteinExistence type="inferred from homology"/>
<feature type="chain" id="PRO_0000207228" description="Leucyl/phenylalanyl-tRNA--protein transferase">
    <location>
        <begin position="1"/>
        <end position="235"/>
    </location>
</feature>
<gene>
    <name evidence="1" type="primary">aat</name>
    <name type="ordered locus">MCA1792</name>
</gene>
<accession>Q607G8</accession>
<name>LFTR_METCA</name>
<reference key="1">
    <citation type="journal article" date="2004" name="PLoS Biol.">
        <title>Genomic insights into methanotrophy: the complete genome sequence of Methylococcus capsulatus (Bath).</title>
        <authorList>
            <person name="Ward N.L."/>
            <person name="Larsen O."/>
            <person name="Sakwa J."/>
            <person name="Bruseth L."/>
            <person name="Khouri H.M."/>
            <person name="Durkin A.S."/>
            <person name="Dimitrov G."/>
            <person name="Jiang L."/>
            <person name="Scanlan D."/>
            <person name="Kang K.H."/>
            <person name="Lewis M.R."/>
            <person name="Nelson K.E."/>
            <person name="Methe B.A."/>
            <person name="Wu M."/>
            <person name="Heidelberg J.F."/>
            <person name="Paulsen I.T."/>
            <person name="Fouts D.E."/>
            <person name="Ravel J."/>
            <person name="Tettelin H."/>
            <person name="Ren Q."/>
            <person name="Read T.D."/>
            <person name="DeBoy R.T."/>
            <person name="Seshadri R."/>
            <person name="Salzberg S.L."/>
            <person name="Jensen H.B."/>
            <person name="Birkeland N.K."/>
            <person name="Nelson W.C."/>
            <person name="Dodson R.J."/>
            <person name="Grindhaug S.H."/>
            <person name="Holt I.E."/>
            <person name="Eidhammer I."/>
            <person name="Jonasen I."/>
            <person name="Vanaken S."/>
            <person name="Utterback T.R."/>
            <person name="Feldblyum T.V."/>
            <person name="Fraser C.M."/>
            <person name="Lillehaug J.R."/>
            <person name="Eisen J.A."/>
        </authorList>
    </citation>
    <scope>NUCLEOTIDE SEQUENCE [LARGE SCALE GENOMIC DNA]</scope>
    <source>
        <strain>ATCC 33009 / NCIMB 11132 / Bath</strain>
    </source>
</reference>
<comment type="function">
    <text evidence="1">Functions in the N-end rule pathway of protein degradation where it conjugates Leu, Phe and, less efficiently, Met from aminoacyl-tRNAs to the N-termini of proteins containing an N-terminal arginine or lysine.</text>
</comment>
<comment type="catalytic activity">
    <reaction evidence="1">
        <text>N-terminal L-lysyl-[protein] + L-leucyl-tRNA(Leu) = N-terminal L-leucyl-L-lysyl-[protein] + tRNA(Leu) + H(+)</text>
        <dbReference type="Rhea" id="RHEA:12340"/>
        <dbReference type="Rhea" id="RHEA-COMP:9613"/>
        <dbReference type="Rhea" id="RHEA-COMP:9622"/>
        <dbReference type="Rhea" id="RHEA-COMP:12670"/>
        <dbReference type="Rhea" id="RHEA-COMP:12671"/>
        <dbReference type="ChEBI" id="CHEBI:15378"/>
        <dbReference type="ChEBI" id="CHEBI:65249"/>
        <dbReference type="ChEBI" id="CHEBI:78442"/>
        <dbReference type="ChEBI" id="CHEBI:78494"/>
        <dbReference type="ChEBI" id="CHEBI:133043"/>
        <dbReference type="EC" id="2.3.2.6"/>
    </reaction>
</comment>
<comment type="catalytic activity">
    <reaction evidence="1">
        <text>N-terminal L-arginyl-[protein] + L-leucyl-tRNA(Leu) = N-terminal L-leucyl-L-arginyl-[protein] + tRNA(Leu) + H(+)</text>
        <dbReference type="Rhea" id="RHEA:50416"/>
        <dbReference type="Rhea" id="RHEA-COMP:9613"/>
        <dbReference type="Rhea" id="RHEA-COMP:9622"/>
        <dbReference type="Rhea" id="RHEA-COMP:12672"/>
        <dbReference type="Rhea" id="RHEA-COMP:12673"/>
        <dbReference type="ChEBI" id="CHEBI:15378"/>
        <dbReference type="ChEBI" id="CHEBI:64719"/>
        <dbReference type="ChEBI" id="CHEBI:78442"/>
        <dbReference type="ChEBI" id="CHEBI:78494"/>
        <dbReference type="ChEBI" id="CHEBI:133044"/>
        <dbReference type="EC" id="2.3.2.6"/>
    </reaction>
</comment>
<comment type="catalytic activity">
    <reaction evidence="1">
        <text>L-phenylalanyl-tRNA(Phe) + an N-terminal L-alpha-aminoacyl-[protein] = an N-terminal L-phenylalanyl-L-alpha-aminoacyl-[protein] + tRNA(Phe)</text>
        <dbReference type="Rhea" id="RHEA:43632"/>
        <dbReference type="Rhea" id="RHEA-COMP:9668"/>
        <dbReference type="Rhea" id="RHEA-COMP:9699"/>
        <dbReference type="Rhea" id="RHEA-COMP:10636"/>
        <dbReference type="Rhea" id="RHEA-COMP:10637"/>
        <dbReference type="ChEBI" id="CHEBI:78442"/>
        <dbReference type="ChEBI" id="CHEBI:78531"/>
        <dbReference type="ChEBI" id="CHEBI:78597"/>
        <dbReference type="ChEBI" id="CHEBI:83561"/>
        <dbReference type="EC" id="2.3.2.6"/>
    </reaction>
</comment>
<comment type="subcellular location">
    <subcellularLocation>
        <location evidence="1">Cytoplasm</location>
    </subcellularLocation>
</comment>
<comment type="similarity">
    <text evidence="1">Belongs to the L/F-transferase family.</text>
</comment>
<dbReference type="EC" id="2.3.2.6" evidence="1"/>
<dbReference type="EMBL" id="AE017282">
    <property type="protein sequence ID" value="AAU92195.1"/>
    <property type="molecule type" value="Genomic_DNA"/>
</dbReference>
<dbReference type="RefSeq" id="WP_010961045.1">
    <property type="nucleotide sequence ID" value="NC_002977.6"/>
</dbReference>
<dbReference type="SMR" id="Q607G8"/>
<dbReference type="STRING" id="243233.MCA1792"/>
<dbReference type="GeneID" id="88224040"/>
<dbReference type="KEGG" id="mca:MCA1792"/>
<dbReference type="eggNOG" id="COG2360">
    <property type="taxonomic scope" value="Bacteria"/>
</dbReference>
<dbReference type="HOGENOM" id="CLU_075045_0_0_6"/>
<dbReference type="Proteomes" id="UP000006821">
    <property type="component" value="Chromosome"/>
</dbReference>
<dbReference type="GO" id="GO:0005737">
    <property type="term" value="C:cytoplasm"/>
    <property type="evidence" value="ECO:0007669"/>
    <property type="project" value="UniProtKB-SubCell"/>
</dbReference>
<dbReference type="GO" id="GO:0008914">
    <property type="term" value="F:leucyl-tRNA--protein transferase activity"/>
    <property type="evidence" value="ECO:0007669"/>
    <property type="project" value="UniProtKB-UniRule"/>
</dbReference>
<dbReference type="GO" id="GO:0030163">
    <property type="term" value="P:protein catabolic process"/>
    <property type="evidence" value="ECO:0007669"/>
    <property type="project" value="UniProtKB-UniRule"/>
</dbReference>
<dbReference type="FunFam" id="3.30.70.3550:FF:000001">
    <property type="entry name" value="Leucyl/phenylalanyl-tRNA--protein transferase"/>
    <property type="match status" value="1"/>
</dbReference>
<dbReference type="FunFam" id="3.40.630.70:FF:000001">
    <property type="entry name" value="Leucyl/phenylalanyl-tRNA--protein transferase"/>
    <property type="match status" value="1"/>
</dbReference>
<dbReference type="Gene3D" id="3.40.630.70">
    <property type="entry name" value="Leucyl/phenylalanyl-tRNA-protein transferase, C-terminal domain"/>
    <property type="match status" value="1"/>
</dbReference>
<dbReference type="Gene3D" id="3.30.70.3550">
    <property type="entry name" value="Leucyl/phenylalanyl-tRNA-protein transferase, N-terminal domain"/>
    <property type="match status" value="1"/>
</dbReference>
<dbReference type="HAMAP" id="MF_00688">
    <property type="entry name" value="Leu_Phe_trans"/>
    <property type="match status" value="1"/>
</dbReference>
<dbReference type="InterPro" id="IPR016181">
    <property type="entry name" value="Acyl_CoA_acyltransferase"/>
</dbReference>
<dbReference type="InterPro" id="IPR004616">
    <property type="entry name" value="Leu/Phe-tRNA_Trfase"/>
</dbReference>
<dbReference type="InterPro" id="IPR042203">
    <property type="entry name" value="Leu/Phe-tRNA_Trfase_C"/>
</dbReference>
<dbReference type="InterPro" id="IPR042221">
    <property type="entry name" value="Leu/Phe-tRNA_Trfase_N"/>
</dbReference>
<dbReference type="NCBIfam" id="TIGR00667">
    <property type="entry name" value="aat"/>
    <property type="match status" value="1"/>
</dbReference>
<dbReference type="PANTHER" id="PTHR30098">
    <property type="entry name" value="LEUCYL/PHENYLALANYL-TRNA--PROTEIN TRANSFERASE"/>
    <property type="match status" value="1"/>
</dbReference>
<dbReference type="PANTHER" id="PTHR30098:SF2">
    <property type="entry name" value="LEUCYL_PHENYLALANYL-TRNA--PROTEIN TRANSFERASE"/>
    <property type="match status" value="1"/>
</dbReference>
<dbReference type="Pfam" id="PF03588">
    <property type="entry name" value="Leu_Phe_trans"/>
    <property type="match status" value="1"/>
</dbReference>
<dbReference type="SUPFAM" id="SSF55729">
    <property type="entry name" value="Acyl-CoA N-acyltransferases (Nat)"/>
    <property type="match status" value="1"/>
</dbReference>
<evidence type="ECO:0000255" key="1">
    <source>
        <dbReference type="HAMAP-Rule" id="MF_00688"/>
    </source>
</evidence>